<feature type="chain" id="PRO_0000257230" description="UDP-N-acetylmuramoylalanine--D-glutamate ligase">
    <location>
        <begin position="1"/>
        <end position="477"/>
    </location>
</feature>
<feature type="binding site" evidence="1">
    <location>
        <begin position="125"/>
        <end position="131"/>
    </location>
    <ligand>
        <name>ATP</name>
        <dbReference type="ChEBI" id="CHEBI:30616"/>
    </ligand>
</feature>
<evidence type="ECO:0000255" key="1">
    <source>
        <dbReference type="HAMAP-Rule" id="MF_00639"/>
    </source>
</evidence>
<protein>
    <recommendedName>
        <fullName evidence="1">UDP-N-acetylmuramoylalanine--D-glutamate ligase</fullName>
        <ecNumber evidence="1">6.3.2.9</ecNumber>
    </recommendedName>
    <alternativeName>
        <fullName evidence="1">D-glutamic acid-adding enzyme</fullName>
    </alternativeName>
    <alternativeName>
        <fullName evidence="1">UDP-N-acetylmuramoyl-L-alanyl-D-glutamate synthetase</fullName>
    </alternativeName>
</protein>
<reference key="1">
    <citation type="journal article" date="2011" name="Stand. Genomic Sci.">
        <title>Complete genome sequence of Rhodospirillum rubrum type strain (S1).</title>
        <authorList>
            <person name="Munk A.C."/>
            <person name="Copeland A."/>
            <person name="Lucas S."/>
            <person name="Lapidus A."/>
            <person name="Del Rio T.G."/>
            <person name="Barry K."/>
            <person name="Detter J.C."/>
            <person name="Hammon N."/>
            <person name="Israni S."/>
            <person name="Pitluck S."/>
            <person name="Brettin T."/>
            <person name="Bruce D."/>
            <person name="Han C."/>
            <person name="Tapia R."/>
            <person name="Gilna P."/>
            <person name="Schmutz J."/>
            <person name="Larimer F."/>
            <person name="Land M."/>
            <person name="Kyrpides N.C."/>
            <person name="Mavromatis K."/>
            <person name="Richardson P."/>
            <person name="Rohde M."/>
            <person name="Goeker M."/>
            <person name="Klenk H.P."/>
            <person name="Zhang Y."/>
            <person name="Roberts G.P."/>
            <person name="Reslewic S."/>
            <person name="Schwartz D.C."/>
        </authorList>
    </citation>
    <scope>NUCLEOTIDE SEQUENCE [LARGE SCALE GENOMIC DNA]</scope>
    <source>
        <strain>ATCC 11170 / ATH 1.1.1 / DSM 467 / LMG 4362 / NCIMB 8255 / S1</strain>
    </source>
</reference>
<dbReference type="EC" id="6.3.2.9" evidence="1"/>
<dbReference type="EMBL" id="CP000230">
    <property type="protein sequence ID" value="ABC21753.1"/>
    <property type="molecule type" value="Genomic_DNA"/>
</dbReference>
<dbReference type="RefSeq" id="WP_011388707.1">
    <property type="nucleotide sequence ID" value="NC_007643.1"/>
</dbReference>
<dbReference type="RefSeq" id="YP_426040.1">
    <property type="nucleotide sequence ID" value="NC_007643.1"/>
</dbReference>
<dbReference type="SMR" id="Q2RVU2"/>
<dbReference type="STRING" id="269796.Rru_A0952"/>
<dbReference type="EnsemblBacteria" id="ABC21753">
    <property type="protein sequence ID" value="ABC21753"/>
    <property type="gene ID" value="Rru_A0952"/>
</dbReference>
<dbReference type="KEGG" id="rru:Rru_A0952"/>
<dbReference type="PATRIC" id="fig|269796.9.peg.1008"/>
<dbReference type="eggNOG" id="COG0771">
    <property type="taxonomic scope" value="Bacteria"/>
</dbReference>
<dbReference type="HOGENOM" id="CLU_032540_3_0_5"/>
<dbReference type="PhylomeDB" id="Q2RVU2"/>
<dbReference type="UniPathway" id="UPA00219"/>
<dbReference type="Proteomes" id="UP000001929">
    <property type="component" value="Chromosome"/>
</dbReference>
<dbReference type="GO" id="GO:0005737">
    <property type="term" value="C:cytoplasm"/>
    <property type="evidence" value="ECO:0007669"/>
    <property type="project" value="UniProtKB-SubCell"/>
</dbReference>
<dbReference type="GO" id="GO:0005524">
    <property type="term" value="F:ATP binding"/>
    <property type="evidence" value="ECO:0007669"/>
    <property type="project" value="UniProtKB-UniRule"/>
</dbReference>
<dbReference type="GO" id="GO:0008764">
    <property type="term" value="F:UDP-N-acetylmuramoylalanine-D-glutamate ligase activity"/>
    <property type="evidence" value="ECO:0007669"/>
    <property type="project" value="UniProtKB-UniRule"/>
</dbReference>
<dbReference type="GO" id="GO:0051301">
    <property type="term" value="P:cell division"/>
    <property type="evidence" value="ECO:0007669"/>
    <property type="project" value="UniProtKB-KW"/>
</dbReference>
<dbReference type="GO" id="GO:0071555">
    <property type="term" value="P:cell wall organization"/>
    <property type="evidence" value="ECO:0007669"/>
    <property type="project" value="UniProtKB-KW"/>
</dbReference>
<dbReference type="GO" id="GO:0009252">
    <property type="term" value="P:peptidoglycan biosynthetic process"/>
    <property type="evidence" value="ECO:0007669"/>
    <property type="project" value="UniProtKB-UniRule"/>
</dbReference>
<dbReference type="GO" id="GO:0008360">
    <property type="term" value="P:regulation of cell shape"/>
    <property type="evidence" value="ECO:0007669"/>
    <property type="project" value="UniProtKB-KW"/>
</dbReference>
<dbReference type="Gene3D" id="3.90.190.20">
    <property type="entry name" value="Mur ligase, C-terminal domain"/>
    <property type="match status" value="1"/>
</dbReference>
<dbReference type="Gene3D" id="3.40.1190.10">
    <property type="entry name" value="Mur-like, catalytic domain"/>
    <property type="match status" value="1"/>
</dbReference>
<dbReference type="Gene3D" id="3.40.50.720">
    <property type="entry name" value="NAD(P)-binding Rossmann-like Domain"/>
    <property type="match status" value="1"/>
</dbReference>
<dbReference type="HAMAP" id="MF_00639">
    <property type="entry name" value="MurD"/>
    <property type="match status" value="1"/>
</dbReference>
<dbReference type="InterPro" id="IPR036565">
    <property type="entry name" value="Mur-like_cat_sf"/>
</dbReference>
<dbReference type="InterPro" id="IPR036615">
    <property type="entry name" value="Mur_ligase_C_dom_sf"/>
</dbReference>
<dbReference type="InterPro" id="IPR013221">
    <property type="entry name" value="Mur_ligase_cen"/>
</dbReference>
<dbReference type="InterPro" id="IPR005762">
    <property type="entry name" value="MurD"/>
</dbReference>
<dbReference type="NCBIfam" id="TIGR01087">
    <property type="entry name" value="murD"/>
    <property type="match status" value="1"/>
</dbReference>
<dbReference type="PANTHER" id="PTHR43692">
    <property type="entry name" value="UDP-N-ACETYLMURAMOYLALANINE--D-GLUTAMATE LIGASE"/>
    <property type="match status" value="1"/>
</dbReference>
<dbReference type="PANTHER" id="PTHR43692:SF1">
    <property type="entry name" value="UDP-N-ACETYLMURAMOYLALANINE--D-GLUTAMATE LIGASE"/>
    <property type="match status" value="1"/>
</dbReference>
<dbReference type="Pfam" id="PF08245">
    <property type="entry name" value="Mur_ligase_M"/>
    <property type="match status" value="1"/>
</dbReference>
<dbReference type="SUPFAM" id="SSF51984">
    <property type="entry name" value="MurCD N-terminal domain"/>
    <property type="match status" value="1"/>
</dbReference>
<dbReference type="SUPFAM" id="SSF53623">
    <property type="entry name" value="MurD-like peptide ligases, catalytic domain"/>
    <property type="match status" value="1"/>
</dbReference>
<dbReference type="SUPFAM" id="SSF53244">
    <property type="entry name" value="MurD-like peptide ligases, peptide-binding domain"/>
    <property type="match status" value="1"/>
</dbReference>
<accession>Q2RVU2</accession>
<sequence length="477" mass="50876">MAKLIPLYQYAGQDLGIMGLGKSGMATARALAGTGTRVHAWDDSPILRDAARAESVPLCDLTDQTSRTSPWPALQGVVWSPGIPHTFPQPHPVAVIAHERGVPLFCDIDLLARARQDCFFLGITGTNGKSTTTALIGHILKAARHPVQVGGNLGTPALSFEPLPFHGTYVLELSSYQLELVPSLCCDVAVLLNITPDHLARHGGMDGYIAAKRQIFRCGPRPGVAVVCIDDEPSLAIHDALCRENGRKVVAVSTRALPRGGVGAVDGQLVDATQGRPRAVADLTTIATLPGAHNWQNAAAAYAACRQHGIDAKIIVEAMASFPGLPHRQELVAEIDGVRFINDSKATNADAADKALRCYDTVYWIAGGQPKEGGIVSLEPHFHRMRQAYLIGQAAPAFERTLKGKVPLSQVGTLTRAVTEAAKAAWRDAIPGAVVLLSPACASWDQFSSFEHRGDIFRELVADLAHTRAAAKPGGRR</sequence>
<proteinExistence type="inferred from homology"/>
<gene>
    <name evidence="1" type="primary">murD</name>
    <name type="ordered locus">Rru_A0952</name>
</gene>
<name>MURD_RHORT</name>
<organism>
    <name type="scientific">Rhodospirillum rubrum (strain ATCC 11170 / ATH 1.1.1 / DSM 467 / LMG 4362 / NCIMB 8255 / S1)</name>
    <dbReference type="NCBI Taxonomy" id="269796"/>
    <lineage>
        <taxon>Bacteria</taxon>
        <taxon>Pseudomonadati</taxon>
        <taxon>Pseudomonadota</taxon>
        <taxon>Alphaproteobacteria</taxon>
        <taxon>Rhodospirillales</taxon>
        <taxon>Rhodospirillaceae</taxon>
        <taxon>Rhodospirillum</taxon>
    </lineage>
</organism>
<keyword id="KW-0067">ATP-binding</keyword>
<keyword id="KW-0131">Cell cycle</keyword>
<keyword id="KW-0132">Cell division</keyword>
<keyword id="KW-0133">Cell shape</keyword>
<keyword id="KW-0961">Cell wall biogenesis/degradation</keyword>
<keyword id="KW-0963">Cytoplasm</keyword>
<keyword id="KW-0436">Ligase</keyword>
<keyword id="KW-0547">Nucleotide-binding</keyword>
<keyword id="KW-0573">Peptidoglycan synthesis</keyword>
<keyword id="KW-1185">Reference proteome</keyword>
<comment type="function">
    <text evidence="1">Cell wall formation. Catalyzes the addition of glutamate to the nucleotide precursor UDP-N-acetylmuramoyl-L-alanine (UMA).</text>
</comment>
<comment type="catalytic activity">
    <reaction evidence="1">
        <text>UDP-N-acetyl-alpha-D-muramoyl-L-alanine + D-glutamate + ATP = UDP-N-acetyl-alpha-D-muramoyl-L-alanyl-D-glutamate + ADP + phosphate + H(+)</text>
        <dbReference type="Rhea" id="RHEA:16429"/>
        <dbReference type="ChEBI" id="CHEBI:15378"/>
        <dbReference type="ChEBI" id="CHEBI:29986"/>
        <dbReference type="ChEBI" id="CHEBI:30616"/>
        <dbReference type="ChEBI" id="CHEBI:43474"/>
        <dbReference type="ChEBI" id="CHEBI:83898"/>
        <dbReference type="ChEBI" id="CHEBI:83900"/>
        <dbReference type="ChEBI" id="CHEBI:456216"/>
        <dbReference type="EC" id="6.3.2.9"/>
    </reaction>
</comment>
<comment type="pathway">
    <text evidence="1">Cell wall biogenesis; peptidoglycan biosynthesis.</text>
</comment>
<comment type="subcellular location">
    <subcellularLocation>
        <location evidence="1">Cytoplasm</location>
    </subcellularLocation>
</comment>
<comment type="similarity">
    <text evidence="1">Belongs to the MurCDEF family.</text>
</comment>